<reference evidence="6" key="1">
    <citation type="journal article" date="2018" name="PLoS ONE">
        <title>Proteomic endorsed transcriptomic profiles of venom glands from Tityus obscurus and T. serrulatus scorpions.</title>
        <authorList>
            <person name="de Oliveira U.C."/>
            <person name="Nishiyama M.Y. Jr."/>
            <person name="Dos Santos M.B.V."/>
            <person name="Santos-da-Silva A.P."/>
            <person name="Chalkidis H.M."/>
            <person name="Souza-Imberg A."/>
            <person name="Candido D.M."/>
            <person name="Yamanouye N."/>
            <person name="Dorce V.A.C."/>
            <person name="Junqueira-de-Azevedo I.L.M."/>
        </authorList>
    </citation>
    <scope>NUCLEOTIDE SEQUENCE [LARGE SCALE MRNA]</scope>
    <source>
        <tissue>Telson</tissue>
    </source>
</reference>
<reference key="2">
    <citation type="journal article" date="2019" name="J. Venom. Anim. Toxins Incl. Trop. Dis.">
        <title>Proteome of fraction from Tityus serrulatus venom reveals new enzymes and toxins.</title>
        <authorList>
            <person name="Amorim F.G."/>
            <person name="Longhim H.T."/>
            <person name="Cologna C.T."/>
            <person name="Degueldre M."/>
            <person name="Pauw E."/>
            <person name="Quinton L."/>
            <person name="Arantes E.C."/>
        </authorList>
    </citation>
    <scope>IDENTIFICATION BY MASS SPECTROMETRY</scope>
    <scope>SUBCELLULAR LOCATION</scope>
    <source>
        <tissue>Venom</tissue>
    </source>
</reference>
<sequence>MNLALFIIFATIFENVVPENCPKMYRRLSKSHTFCTPSTCKIEAGGKVTESDKQTILETHNQLRNKLATGKENQYQKLSSAANMMQMEWDDELAAVAQAHANQCKFEHDSGDQRAVGNFSVGQNLLETSGIFSIDWGKVKIWYTTEVDDFYPEYNKPFQFHGSYGHFSQVIWAKTWKVGCGVAGYVENGVKKVLYTCNYGPAGNLVGSEAYQVGSPCSACPENTKCSATYPGLCKSITPDGPQIRRPSSKDYLLYCDFSDKDPKACKDVTMTGSRPFTTQKLYTGKYVTQVFNAGENMTINFGKFEHKGGLCAFLIGRFGPNVAGETAASEVNFHFSAPHLIFPEGMKETRPITSWHTIGILMRWDKELQISYVFKVKPPTAKPPPQYFEFKEYGVKGGSCP</sequence>
<keyword id="KW-1015">Disulfide bond</keyword>
<keyword id="KW-0964">Secreted</keyword>
<keyword id="KW-0732">Signal</keyword>
<name>CRVP_TITSE</name>
<proteinExistence type="evidence at protein level"/>
<evidence type="ECO:0000255" key="1"/>
<evidence type="ECO:0000269" key="2">
    <source>
    </source>
</evidence>
<evidence type="ECO:0000303" key="3">
    <source>
    </source>
</evidence>
<evidence type="ECO:0000305" key="4"/>
<evidence type="ECO:0000305" key="5">
    <source>
    </source>
</evidence>
<evidence type="ECO:0000312" key="6">
    <source>
        <dbReference type="EMBL" id="JAW07031.1"/>
    </source>
</evidence>
<organism>
    <name type="scientific">Tityus serrulatus</name>
    <name type="common">Brazilian scorpion</name>
    <dbReference type="NCBI Taxonomy" id="6887"/>
    <lineage>
        <taxon>Eukaryota</taxon>
        <taxon>Metazoa</taxon>
        <taxon>Ecdysozoa</taxon>
        <taxon>Arthropoda</taxon>
        <taxon>Chelicerata</taxon>
        <taxon>Arachnida</taxon>
        <taxon>Scorpiones</taxon>
        <taxon>Buthida</taxon>
        <taxon>Buthoidea</taxon>
        <taxon>Buthidae</taxon>
        <taxon>Tityus</taxon>
    </lineage>
</organism>
<accession>A0A218QX58</accession>
<dbReference type="EMBL" id="GEUW01000014">
    <property type="protein sequence ID" value="JAW07031.1"/>
    <property type="molecule type" value="Transcribed_RNA"/>
</dbReference>
<dbReference type="SMR" id="A0A218QX58"/>
<dbReference type="GO" id="GO:0005576">
    <property type="term" value="C:extracellular region"/>
    <property type="evidence" value="ECO:0007669"/>
    <property type="project" value="UniProtKB-SubCell"/>
</dbReference>
<dbReference type="CDD" id="cd05380">
    <property type="entry name" value="CAP_euk"/>
    <property type="match status" value="1"/>
</dbReference>
<dbReference type="Gene3D" id="3.40.33.10">
    <property type="entry name" value="CAP"/>
    <property type="match status" value="1"/>
</dbReference>
<dbReference type="InterPro" id="IPR018244">
    <property type="entry name" value="Allrgn_V5/Tpx1_CS"/>
</dbReference>
<dbReference type="InterPro" id="IPR014044">
    <property type="entry name" value="CAP_dom"/>
</dbReference>
<dbReference type="InterPro" id="IPR035940">
    <property type="entry name" value="CAP_sf"/>
</dbReference>
<dbReference type="InterPro" id="IPR001283">
    <property type="entry name" value="CRISP-related"/>
</dbReference>
<dbReference type="InterPro" id="IPR002413">
    <property type="entry name" value="V5_allergen-like"/>
</dbReference>
<dbReference type="PANTHER" id="PTHR10334">
    <property type="entry name" value="CYSTEINE-RICH SECRETORY PROTEIN-RELATED"/>
    <property type="match status" value="1"/>
</dbReference>
<dbReference type="Pfam" id="PF00188">
    <property type="entry name" value="CAP"/>
    <property type="match status" value="1"/>
</dbReference>
<dbReference type="PRINTS" id="PR00838">
    <property type="entry name" value="V5ALLERGEN"/>
</dbReference>
<dbReference type="PRINTS" id="PR00837">
    <property type="entry name" value="V5TPXLIKE"/>
</dbReference>
<dbReference type="SMART" id="SM00198">
    <property type="entry name" value="SCP"/>
    <property type="match status" value="1"/>
</dbReference>
<dbReference type="SUPFAM" id="SSF55797">
    <property type="entry name" value="PR-1-like"/>
    <property type="match status" value="1"/>
</dbReference>
<dbReference type="PROSITE" id="PS01009">
    <property type="entry name" value="CRISP_1"/>
    <property type="match status" value="1"/>
</dbReference>
<dbReference type="PROSITE" id="PS01010">
    <property type="entry name" value="CRISP_2"/>
    <property type="match status" value="1"/>
</dbReference>
<protein>
    <recommendedName>
        <fullName evidence="4">Cysteine-rich venom protein</fullName>
    </recommendedName>
    <alternativeName>
        <fullName evidence="4">CRIVP</fullName>
    </alternativeName>
    <alternativeName>
        <fullName evidence="3">Cysteine-rich protein</fullName>
    </alternativeName>
</protein>
<feature type="signal peptide" evidence="5">
    <location>
        <begin position="1"/>
        <end position="13"/>
    </location>
</feature>
<feature type="chain" id="PRO_5012849536" description="Cysteine-rich venom protein" evidence="5">
    <location>
        <begin position="14"/>
        <end position="402"/>
    </location>
</feature>
<feature type="domain" description="SCP" evidence="1">
    <location>
        <begin position="57"/>
        <end position="199"/>
    </location>
</feature>
<comment type="subcellular location">
    <subcellularLocation>
        <location evidence="2">Secreted</location>
    </subcellularLocation>
</comment>
<comment type="tissue specificity">
    <text>Expressed by the venom gland.</text>
</comment>
<comment type="PTM">
    <text evidence="4">Contains 7 disulfide bonds.</text>
</comment>
<comment type="similarity">
    <text evidence="4">Belongs to the CRISP family.</text>
</comment>